<feature type="chain" id="PRO_0000127409" description="Neuronal PAS domain-containing protein 3">
    <location>
        <begin position="1"/>
        <end position="925"/>
    </location>
</feature>
<feature type="domain" description="bHLH" evidence="2">
    <location>
        <begin position="58"/>
        <end position="111"/>
    </location>
</feature>
<feature type="domain" description="PAS 1" evidence="1">
    <location>
        <begin position="152"/>
        <end position="222"/>
    </location>
</feature>
<feature type="domain" description="PAS 2" evidence="1">
    <location>
        <begin position="324"/>
        <end position="394"/>
    </location>
</feature>
<feature type="domain" description="PAC">
    <location>
        <begin position="398"/>
        <end position="441"/>
    </location>
</feature>
<feature type="region of interest" description="DNA-binding" evidence="5">
    <location>
        <begin position="60"/>
        <end position="71"/>
    </location>
</feature>
<feature type="region of interest" description="Disordered" evidence="3">
    <location>
        <begin position="119"/>
        <end position="138"/>
    </location>
</feature>
<feature type="region of interest" description="Disordered" evidence="3">
    <location>
        <begin position="219"/>
        <end position="257"/>
    </location>
</feature>
<feature type="region of interest" description="Disordered" evidence="3">
    <location>
        <begin position="457"/>
        <end position="555"/>
    </location>
</feature>
<feature type="region of interest" description="Disordered" evidence="3">
    <location>
        <begin position="576"/>
        <end position="645"/>
    </location>
</feature>
<feature type="region of interest" description="Disordered" evidence="3">
    <location>
        <begin position="664"/>
        <end position="774"/>
    </location>
</feature>
<feature type="compositionally biased region" description="Low complexity" evidence="3">
    <location>
        <begin position="234"/>
        <end position="256"/>
    </location>
</feature>
<feature type="compositionally biased region" description="Basic and acidic residues" evidence="3">
    <location>
        <begin position="484"/>
        <end position="493"/>
    </location>
</feature>
<feature type="compositionally biased region" description="Basic and acidic residues" evidence="3">
    <location>
        <begin position="529"/>
        <end position="549"/>
    </location>
</feature>
<feature type="compositionally biased region" description="Basic residues" evidence="3">
    <location>
        <begin position="601"/>
        <end position="622"/>
    </location>
</feature>
<feature type="compositionally biased region" description="Polar residues" evidence="3">
    <location>
        <begin position="680"/>
        <end position="690"/>
    </location>
</feature>
<feature type="compositionally biased region" description="Gly residues" evidence="3">
    <location>
        <begin position="700"/>
        <end position="710"/>
    </location>
</feature>
<feature type="compositionally biased region" description="Gly residues" evidence="3">
    <location>
        <begin position="760"/>
        <end position="771"/>
    </location>
</feature>
<feature type="sequence conflict" description="In Ref. 2; AAG35181." evidence="6" ref="2">
    <original>R</original>
    <variation>L</variation>
    <location>
        <position position="141"/>
    </location>
</feature>
<feature type="sequence conflict" description="In Ref. 2; AAG35181." evidence="6" ref="2">
    <original>G</original>
    <variation>E</variation>
    <location>
        <position position="156"/>
    </location>
</feature>
<feature type="sequence conflict" description="In Ref. 2; AAG35181." evidence="6" ref="2">
    <original>F</original>
    <variation>L</variation>
    <location>
        <position position="166"/>
    </location>
</feature>
<reference key="1">
    <citation type="journal article" date="1999" name="Mech. Dev.">
        <title>Characterization of Npas3, a novel basic helix-loop-helix PAS gene expressed in the developing mouse nervous system.</title>
        <authorList>
            <person name="Brunskill E.W."/>
            <person name="Witte D.P."/>
            <person name="Shreiner A.B."/>
            <person name="Potter S.S."/>
        </authorList>
    </citation>
    <scope>NUCLEOTIDE SEQUENCE [MRNA]</scope>
</reference>
<reference key="2">
    <citation type="submission" date="1999-07" db="EMBL/GenBank/DDBJ databases">
        <title>Cloning and chromosomal localization of MOP6.</title>
        <authorList>
            <person name="Thomas R.S."/>
            <person name="Bradfield C.A."/>
        </authorList>
    </citation>
    <scope>NUCLEOTIDE SEQUENCE [MRNA] OF 141-280</scope>
</reference>
<reference key="3">
    <citation type="journal article" date="2004" name="Proc. Natl. Acad. Sci. U.S.A.">
        <title>Behavioral and regulatory abnormalities in mice deficient in the NPAS1 and NPAS3 transcription factors.</title>
        <authorList>
            <person name="Erbel-Sieler C."/>
            <person name="Dudley C."/>
            <person name="Zhou Y."/>
            <person name="Wu X."/>
            <person name="Estill S.J."/>
            <person name="Han T."/>
            <person name="Diaz-Arrastia R."/>
            <person name="Brunskill E.W."/>
            <person name="Potter S.S."/>
            <person name="McKnight S.L."/>
        </authorList>
    </citation>
    <scope>FUNCTION</scope>
    <scope>SUBCELLULAR LOCATION</scope>
</reference>
<reference key="4">
    <citation type="journal article" date="2010" name="Cell">
        <title>A tissue-specific atlas of mouse protein phosphorylation and expression.</title>
        <authorList>
            <person name="Huttlin E.L."/>
            <person name="Jedrychowski M.P."/>
            <person name="Elias J.E."/>
            <person name="Goswami T."/>
            <person name="Rad R."/>
            <person name="Beausoleil S.A."/>
            <person name="Villen J."/>
            <person name="Haas W."/>
            <person name="Sowa M.E."/>
            <person name="Gygi S.P."/>
        </authorList>
    </citation>
    <scope>IDENTIFICATION BY MASS SPECTROMETRY [LARGE SCALE ANALYSIS]</scope>
    <source>
        <tissue>Brain</tissue>
    </source>
</reference>
<reference evidence="7" key="5">
    <citation type="journal article" date="2016" name="Elife">
        <title>NPAS1-ARNT and NPAS3-ARNT crystal structures implicate the bHLH-PAS family as multi-ligand binding transcription factors.</title>
        <authorList>
            <person name="Wu D."/>
            <person name="Su X."/>
            <person name="Potluri N."/>
            <person name="Kim Y."/>
            <person name="Rastinejad F."/>
        </authorList>
    </citation>
    <scope>X-RAY CRYSTALLOGRAPHY (4.20 ANGSTROMS) OF 56-455 IN COMPLEXES WITH ARNT AND DNA</scope>
    <scope>INTERACTION WITH ARNT</scope>
    <scope>HETERODIMERIZATION</scope>
    <scope>REGION</scope>
</reference>
<accession>Q9QZQ0</accession>
<accession>Q9EQP4</accession>
<proteinExistence type="evidence at protein level"/>
<dbReference type="EMBL" id="AF173871">
    <property type="protein sequence ID" value="AAF14283.1"/>
    <property type="molecule type" value="mRNA"/>
</dbReference>
<dbReference type="EMBL" id="AF168769">
    <property type="protein sequence ID" value="AAG35181.1"/>
    <property type="molecule type" value="mRNA"/>
</dbReference>
<dbReference type="PDB" id="5SY7">
    <property type="method" value="X-ray"/>
    <property type="resolution" value="4.20 A"/>
    <property type="chains" value="B=56-455"/>
</dbReference>
<dbReference type="PDBsum" id="5SY7"/>
<dbReference type="SMR" id="Q9QZQ0"/>
<dbReference type="FunCoup" id="Q9QZQ0">
    <property type="interactions" value="1903"/>
</dbReference>
<dbReference type="STRING" id="10090.ENSMUSP00000098975"/>
<dbReference type="GlyGen" id="Q9QZQ0">
    <property type="glycosylation" value="5 sites, 1 N-linked glycan (1 site), 1 O-linked glycan (4 sites)"/>
</dbReference>
<dbReference type="iPTMnet" id="Q9QZQ0"/>
<dbReference type="PhosphoSitePlus" id="Q9QZQ0"/>
<dbReference type="PaxDb" id="10090-ENSMUSP00000098975"/>
<dbReference type="ProteomicsDB" id="295509"/>
<dbReference type="AGR" id="MGI:1351610"/>
<dbReference type="MGI" id="MGI:1351610">
    <property type="gene designation" value="Npas3"/>
</dbReference>
<dbReference type="eggNOG" id="KOG3558">
    <property type="taxonomic scope" value="Eukaryota"/>
</dbReference>
<dbReference type="InParanoid" id="Q9QZQ0"/>
<dbReference type="PhylomeDB" id="Q9QZQ0"/>
<dbReference type="ChiTaRS" id="Npas3">
    <property type="organism name" value="mouse"/>
</dbReference>
<dbReference type="PRO" id="PR:Q9QZQ0"/>
<dbReference type="Proteomes" id="UP000000589">
    <property type="component" value="Unplaced"/>
</dbReference>
<dbReference type="RNAct" id="Q9QZQ0">
    <property type="molecule type" value="protein"/>
</dbReference>
<dbReference type="GO" id="GO:0005634">
    <property type="term" value="C:nucleus"/>
    <property type="evidence" value="ECO:0000314"/>
    <property type="project" value="MGI"/>
</dbReference>
<dbReference type="GO" id="GO:0003677">
    <property type="term" value="F:DNA binding"/>
    <property type="evidence" value="ECO:0007669"/>
    <property type="project" value="UniProtKB-KW"/>
</dbReference>
<dbReference type="GO" id="GO:0046982">
    <property type="term" value="F:protein heterodimerization activity"/>
    <property type="evidence" value="ECO:0000314"/>
    <property type="project" value="UniProtKB"/>
</dbReference>
<dbReference type="GO" id="GO:0007626">
    <property type="term" value="P:locomotory behavior"/>
    <property type="evidence" value="ECO:0000315"/>
    <property type="project" value="MGI"/>
</dbReference>
<dbReference type="GO" id="GO:0042711">
    <property type="term" value="P:maternal behavior"/>
    <property type="evidence" value="ECO:0000316"/>
    <property type="project" value="MGI"/>
</dbReference>
<dbReference type="GO" id="GO:0045893">
    <property type="term" value="P:positive regulation of DNA-templated transcription"/>
    <property type="evidence" value="ECO:0000314"/>
    <property type="project" value="UniProtKB"/>
</dbReference>
<dbReference type="GO" id="GO:0001964">
    <property type="term" value="P:startle response"/>
    <property type="evidence" value="ECO:0000316"/>
    <property type="project" value="MGI"/>
</dbReference>
<dbReference type="CDD" id="cd19732">
    <property type="entry name" value="bHLH-PAS_NPAS3_PASD6"/>
    <property type="match status" value="1"/>
</dbReference>
<dbReference type="CDD" id="cd00130">
    <property type="entry name" value="PAS"/>
    <property type="match status" value="2"/>
</dbReference>
<dbReference type="FunFam" id="3.30.450.20:FF:000021">
    <property type="entry name" value="Neuronal PAS domain-containing protein 3"/>
    <property type="match status" value="1"/>
</dbReference>
<dbReference type="FunFam" id="3.30.450.20:FF:000091">
    <property type="entry name" value="Neuronal PAS domain-containing protein 3"/>
    <property type="match status" value="1"/>
</dbReference>
<dbReference type="FunFam" id="4.10.280.10:FF:000007">
    <property type="entry name" value="single-minded homolog 1 isoform X1"/>
    <property type="match status" value="1"/>
</dbReference>
<dbReference type="Gene3D" id="4.10.280.10">
    <property type="entry name" value="Helix-loop-helix DNA-binding domain"/>
    <property type="match status" value="1"/>
</dbReference>
<dbReference type="Gene3D" id="3.30.450.20">
    <property type="entry name" value="PAS domain"/>
    <property type="match status" value="2"/>
</dbReference>
<dbReference type="InterPro" id="IPR011598">
    <property type="entry name" value="bHLH_dom"/>
</dbReference>
<dbReference type="InterPro" id="IPR036638">
    <property type="entry name" value="HLH_DNA-bd_sf"/>
</dbReference>
<dbReference type="InterPro" id="IPR000014">
    <property type="entry name" value="PAS"/>
</dbReference>
<dbReference type="InterPro" id="IPR035965">
    <property type="entry name" value="PAS-like_dom_sf"/>
</dbReference>
<dbReference type="InterPro" id="IPR013767">
    <property type="entry name" value="PAS_fold"/>
</dbReference>
<dbReference type="InterPro" id="IPR013655">
    <property type="entry name" value="PAS_fold_3"/>
</dbReference>
<dbReference type="PANTHER" id="PTHR23043">
    <property type="entry name" value="HYPOXIA-INDUCIBLE FACTOR 1 ALPHA"/>
    <property type="match status" value="1"/>
</dbReference>
<dbReference type="PANTHER" id="PTHR23043:SF30">
    <property type="entry name" value="NEURONAL PAS DOMAIN-CONTAINING PROTEIN 3"/>
    <property type="match status" value="1"/>
</dbReference>
<dbReference type="Pfam" id="PF23171">
    <property type="entry name" value="bHLH_HIF1A"/>
    <property type="match status" value="1"/>
</dbReference>
<dbReference type="Pfam" id="PF00989">
    <property type="entry name" value="PAS"/>
    <property type="match status" value="1"/>
</dbReference>
<dbReference type="Pfam" id="PF08447">
    <property type="entry name" value="PAS_3"/>
    <property type="match status" value="1"/>
</dbReference>
<dbReference type="SMART" id="SM00353">
    <property type="entry name" value="HLH"/>
    <property type="match status" value="1"/>
</dbReference>
<dbReference type="SMART" id="SM00091">
    <property type="entry name" value="PAS"/>
    <property type="match status" value="2"/>
</dbReference>
<dbReference type="SUPFAM" id="SSF47459">
    <property type="entry name" value="HLH, helix-loop-helix DNA-binding domain"/>
    <property type="match status" value="1"/>
</dbReference>
<dbReference type="SUPFAM" id="SSF55785">
    <property type="entry name" value="PYP-like sensor domain (PAS domain)"/>
    <property type="match status" value="2"/>
</dbReference>
<dbReference type="PROSITE" id="PS50888">
    <property type="entry name" value="BHLH"/>
    <property type="match status" value="1"/>
</dbReference>
<dbReference type="PROSITE" id="PS50112">
    <property type="entry name" value="PAS"/>
    <property type="match status" value="2"/>
</dbReference>
<keyword id="KW-0002">3D-structure</keyword>
<keyword id="KW-0238">DNA-binding</keyword>
<keyword id="KW-0539">Nucleus</keyword>
<keyword id="KW-1185">Reference proteome</keyword>
<keyword id="KW-0677">Repeat</keyword>
<keyword id="KW-0804">Transcription</keyword>
<keyword id="KW-0805">Transcription regulation</keyword>
<organism>
    <name type="scientific">Mus musculus</name>
    <name type="common">Mouse</name>
    <dbReference type="NCBI Taxonomy" id="10090"/>
    <lineage>
        <taxon>Eukaryota</taxon>
        <taxon>Metazoa</taxon>
        <taxon>Chordata</taxon>
        <taxon>Craniata</taxon>
        <taxon>Vertebrata</taxon>
        <taxon>Euteleostomi</taxon>
        <taxon>Mammalia</taxon>
        <taxon>Eutheria</taxon>
        <taxon>Euarchontoglires</taxon>
        <taxon>Glires</taxon>
        <taxon>Rodentia</taxon>
        <taxon>Myomorpha</taxon>
        <taxon>Muroidea</taxon>
        <taxon>Muridae</taxon>
        <taxon>Murinae</taxon>
        <taxon>Mus</taxon>
        <taxon>Mus</taxon>
    </lineage>
</organism>
<gene>
    <name type="primary">Npas3</name>
    <name type="synonym">Mop6</name>
</gene>
<name>NPAS3_MOUSE</name>
<comment type="function">
    <text evidence="4">May play a broad role in neurogenesis. May control regulatory pathways relevant to schizophrenia and to psychotic illness.</text>
</comment>
<comment type="subunit">
    <text evidence="5">Efficient DNA binding requires dimerization with another bHLH protein. Interacts with ARNT; forms a heterodimer that binds core DNA sequence 5'-[AG]CGTG-3' within the hypoxia response element (HRE) of target gene promoters (PubMed:27782878).</text>
</comment>
<comment type="subcellular location">
    <subcellularLocation>
        <location evidence="2 4">Nucleus</location>
    </subcellularLocation>
</comment>
<comment type="tissue specificity">
    <text>Detected exclusively in adult brain in inhibitory interneurons.</text>
</comment>
<comment type="developmental stage">
    <text>Expression detected between 9.5 and 11.5 dpc in the developing neural tube. Was also expressed throughout the neuroepithelium of the developing central nervous system between 10. 5 and 12.5 dpc at 14.5 dpc, the expression became restricted to the neopallial layer of the cortex. At 12.5 dpc, expression was evident in nonneural tissues such as the developing dermis and mesenchyme surrounding the otic and nasal placodes. Expression was also detected in the developing cardiac valves, limb and developing kidney.</text>
</comment>
<evidence type="ECO:0000255" key="1">
    <source>
        <dbReference type="PROSITE-ProRule" id="PRU00140"/>
    </source>
</evidence>
<evidence type="ECO:0000255" key="2">
    <source>
        <dbReference type="PROSITE-ProRule" id="PRU00981"/>
    </source>
</evidence>
<evidence type="ECO:0000256" key="3">
    <source>
        <dbReference type="SAM" id="MobiDB-lite"/>
    </source>
</evidence>
<evidence type="ECO:0000269" key="4">
    <source>
    </source>
</evidence>
<evidence type="ECO:0000269" key="5">
    <source>
    </source>
</evidence>
<evidence type="ECO:0000305" key="6"/>
<evidence type="ECO:0007744" key="7">
    <source>
        <dbReference type="PDB" id="5SY7"/>
    </source>
</evidence>
<sequence>MGRAGAAANGTPQNVQGITSYQQRITAQHPLPNQSECRKIYRYDGIYCESTYQNLQALRKEKSRDAARSRRGKENFEFYELAKLLPLPAAITSQLDKASIIRLTISYLKMRDFANQGDPPWNLRMEGPPPNTSVKGAQRRRSPSALAIEVFEAHLGSHILQSLDGFVFALNQEGKFLYISETVSIYLGLSQVELTGSSVFDYVHPGDHVEMAEQLGMKLPPGRGLLSQGTTEDAASSASSSSQSETPEPVETTSPSLLTTDNTLERSFFIRMKSTLTKRGVHIKSSGYKVIHITGRLRLRVPLSHGRTVPSQIMGLVVVAHALPPPTINEVRIDCHMFVTRVNMDLNIIYCENRISDYMDLTPVDIVGKRCYHFIHAEDVEGIRHSHLDLLNKGQCVTKYYRWMQKNGGYIWIQSSATIAINAKNANEKNIIWVNYLLSNPEYKDTPMDIAQLPHLPEKASESSETSDSESDSKDTSGITEDNENSKSDEKGNQSENSEDPEPDRKKSGSACDNDMNCNDDGHSSSNPDSRDSDDSFEHSDFEHPKAAEDGFGALGPMQIKVERYVESEADLRLQPCESLTSDSAKDSDSANEAGAQASSKHQKRKRRRKRQKGGSASRRRLSSASSPGLDAGLVEPPRLLSSPHSASVLKIKTEIAEPINFDNESSIWNYPPNREISRNESPYSMTKPPTSEHFPSPQGQGGSIGGGGALHVAIPDSVLTPPGADGTAGRKTQFSGTAPVPSDPLSPPLSASPRDKHPGGGAGSGGGGPGASNSLLYTGDLEALQRLQAGNVVLPLVHRVTGTLAATSTAAQRVYTTGTIRYAPAEVTLAMQGNLLPNAHAVNFVDVNSPGFGLDPKTPMEMLYHHVHRLNMSGPFGGAVSAASLTQMPGGNVFTTAEGLFSTLPFPVYSNGIHAAQTLERKED</sequence>
<protein>
    <recommendedName>
        <fullName>Neuronal PAS domain-containing protein 3</fullName>
        <shortName>Neuronal PAS3</shortName>
    </recommendedName>
    <alternativeName>
        <fullName>Basic-helix-loop-helix-PAS protein MOP6</fullName>
    </alternativeName>
    <alternativeName>
        <fullName>Member of PAS protein 6</fullName>
    </alternativeName>
</protein>